<comment type="function">
    <text>Part of an ATP-driven transport system TroABCD for zinc.</text>
</comment>
<comment type="subcellular location">
    <subcellularLocation>
        <location>Cell membrane</location>
        <topology>Multi-pass membrane protein</topology>
    </subcellularLocation>
</comment>
<comment type="similarity">
    <text evidence="2">Belongs to the ABC-3 integral membrane protein family.</text>
</comment>
<protein>
    <recommendedName>
        <fullName>Zinc transport system membrane protein TroC</fullName>
    </recommendedName>
</protein>
<feature type="chain" id="PRO_0000171154" description="Zinc transport system membrane protein TroC">
    <location>
        <begin position="1"/>
        <end position="298"/>
    </location>
</feature>
<feature type="transmembrane region" description="Helical" evidence="1">
    <location>
        <begin position="16"/>
        <end position="36"/>
    </location>
</feature>
<feature type="transmembrane region" description="Helical" evidence="1">
    <location>
        <begin position="41"/>
        <end position="61"/>
    </location>
</feature>
<feature type="transmembrane region" description="Helical" evidence="1">
    <location>
        <begin position="68"/>
        <end position="88"/>
    </location>
</feature>
<feature type="transmembrane region" description="Helical" evidence="1">
    <location>
        <begin position="97"/>
        <end position="117"/>
    </location>
</feature>
<feature type="transmembrane region" description="Helical" evidence="1">
    <location>
        <begin position="144"/>
        <end position="164"/>
    </location>
</feature>
<feature type="transmembrane region" description="Helical" evidence="1">
    <location>
        <begin position="187"/>
        <end position="207"/>
    </location>
</feature>
<feature type="transmembrane region" description="Helical" evidence="1">
    <location>
        <begin position="229"/>
        <end position="249"/>
    </location>
</feature>
<feature type="transmembrane region" description="Helical" evidence="1">
    <location>
        <begin position="255"/>
        <end position="275"/>
    </location>
</feature>
<proteinExistence type="inferred from homology"/>
<evidence type="ECO:0000255" key="1"/>
<evidence type="ECO:0000305" key="2"/>
<name>TROC_TREPA</name>
<organism>
    <name type="scientific">Treponema pallidum (strain Nichols)</name>
    <dbReference type="NCBI Taxonomy" id="243276"/>
    <lineage>
        <taxon>Bacteria</taxon>
        <taxon>Pseudomonadati</taxon>
        <taxon>Spirochaetota</taxon>
        <taxon>Spirochaetia</taxon>
        <taxon>Spirochaetales</taxon>
        <taxon>Treponemataceae</taxon>
        <taxon>Treponema</taxon>
    </lineage>
</organism>
<gene>
    <name type="primary">troC</name>
    <name type="ordered locus">TP_0165</name>
</gene>
<accession>P96118</accession>
<keyword id="KW-1003">Cell membrane</keyword>
<keyword id="KW-0406">Ion transport</keyword>
<keyword id="KW-0472">Membrane</keyword>
<keyword id="KW-1185">Reference proteome</keyword>
<keyword id="KW-0812">Transmembrane</keyword>
<keyword id="KW-1133">Transmembrane helix</keyword>
<keyword id="KW-0813">Transport</keyword>
<keyword id="KW-0862">Zinc</keyword>
<keyword id="KW-0864">Zinc transport</keyword>
<reference key="1">
    <citation type="journal article" date="1997" name="Gene">
        <title>Identification and transcriptional analysis of a Treponema pallidum operon encoding a putative ABC transport system, an iron-activated repressor protein homolog, and a glycolytic pathway enzyme homolog.</title>
        <authorList>
            <person name="Hardham J.M."/>
            <person name="Stamm L.V."/>
            <person name="Porcella S.F."/>
            <person name="Frye J.G."/>
            <person name="Barnes N.Y."/>
            <person name="Howell J.K."/>
            <person name="Mueller S.L."/>
            <person name="Radolf J.D."/>
            <person name="Weinstock G.M."/>
            <person name="Norris S.J."/>
        </authorList>
    </citation>
    <scope>NUCLEOTIDE SEQUENCE [GENOMIC DNA]</scope>
    <source>
        <strain>Nichols</strain>
    </source>
</reference>
<reference key="2">
    <citation type="journal article" date="1998" name="Science">
        <title>Complete genome sequence of Treponema pallidum, the syphilis spirochete.</title>
        <authorList>
            <person name="Fraser C.M."/>
            <person name="Norris S.J."/>
            <person name="Weinstock G.M."/>
            <person name="White O."/>
            <person name="Sutton G.G."/>
            <person name="Dodson R.J."/>
            <person name="Gwinn M.L."/>
            <person name="Hickey E.K."/>
            <person name="Clayton R.A."/>
            <person name="Ketchum K.A."/>
            <person name="Sodergren E."/>
            <person name="Hardham J.M."/>
            <person name="McLeod M.P."/>
            <person name="Salzberg S.L."/>
            <person name="Peterson J.D."/>
            <person name="Khalak H.G."/>
            <person name="Richardson D.L."/>
            <person name="Howell J.K."/>
            <person name="Chidambaram M."/>
            <person name="Utterback T.R."/>
            <person name="McDonald L.A."/>
            <person name="Artiach P."/>
            <person name="Bowman C."/>
            <person name="Cotton M.D."/>
            <person name="Fujii C."/>
            <person name="Garland S.A."/>
            <person name="Hatch B."/>
            <person name="Horst K."/>
            <person name="Roberts K.M."/>
            <person name="Sandusky M."/>
            <person name="Weidman J.F."/>
            <person name="Smith H.O."/>
            <person name="Venter J.C."/>
        </authorList>
    </citation>
    <scope>NUCLEOTIDE SEQUENCE [LARGE SCALE GENOMIC DNA]</scope>
    <source>
        <strain>Nichols</strain>
    </source>
</reference>
<dbReference type="EMBL" id="U55214">
    <property type="protein sequence ID" value="AAC45727.1"/>
    <property type="molecule type" value="Genomic_DNA"/>
</dbReference>
<dbReference type="EMBL" id="AE000520">
    <property type="protein sequence ID" value="AAC65155.1"/>
    <property type="molecule type" value="Genomic_DNA"/>
</dbReference>
<dbReference type="PIR" id="B71357">
    <property type="entry name" value="B71357"/>
</dbReference>
<dbReference type="RefSeq" id="WP_010881612.1">
    <property type="nucleotide sequence ID" value="NC_021490.2"/>
</dbReference>
<dbReference type="SMR" id="P96118"/>
<dbReference type="IntAct" id="P96118">
    <property type="interactions" value="3"/>
</dbReference>
<dbReference type="STRING" id="243276.TP_0165"/>
<dbReference type="TCDB" id="3.A.1.15.8">
    <property type="family name" value="the atp-binding cassette (abc) superfamily"/>
</dbReference>
<dbReference type="EnsemblBacteria" id="AAC65155">
    <property type="protein sequence ID" value="AAC65155"/>
    <property type="gene ID" value="TP_0165"/>
</dbReference>
<dbReference type="GeneID" id="93875957"/>
<dbReference type="KEGG" id="tpa:TP_0165"/>
<dbReference type="KEGG" id="tpw:TPANIC_0165"/>
<dbReference type="eggNOG" id="COG1108">
    <property type="taxonomic scope" value="Bacteria"/>
</dbReference>
<dbReference type="HOGENOM" id="CLU_028808_0_0_12"/>
<dbReference type="OrthoDB" id="9798540at2"/>
<dbReference type="Proteomes" id="UP000000811">
    <property type="component" value="Chromosome"/>
</dbReference>
<dbReference type="GO" id="GO:0043190">
    <property type="term" value="C:ATP-binding cassette (ABC) transporter complex"/>
    <property type="evidence" value="ECO:0007669"/>
    <property type="project" value="InterPro"/>
</dbReference>
<dbReference type="GO" id="GO:0010043">
    <property type="term" value="P:response to zinc ion"/>
    <property type="evidence" value="ECO:0007669"/>
    <property type="project" value="TreeGrafter"/>
</dbReference>
<dbReference type="GO" id="GO:0055085">
    <property type="term" value="P:transmembrane transport"/>
    <property type="evidence" value="ECO:0007669"/>
    <property type="project" value="InterPro"/>
</dbReference>
<dbReference type="GO" id="GO:0006829">
    <property type="term" value="P:zinc ion transport"/>
    <property type="evidence" value="ECO:0007669"/>
    <property type="project" value="UniProtKB-KW"/>
</dbReference>
<dbReference type="CDD" id="cd06550">
    <property type="entry name" value="TM_ABC_iron-siderophores_like"/>
    <property type="match status" value="1"/>
</dbReference>
<dbReference type="Gene3D" id="1.10.3470.10">
    <property type="entry name" value="ABC transporter involved in vitamin B12 uptake, BtuC"/>
    <property type="match status" value="1"/>
</dbReference>
<dbReference type="InterPro" id="IPR037294">
    <property type="entry name" value="ABC_BtuC-like"/>
</dbReference>
<dbReference type="InterPro" id="IPR001626">
    <property type="entry name" value="ABC_TroCD"/>
</dbReference>
<dbReference type="PANTHER" id="PTHR30477">
    <property type="entry name" value="ABC-TRANSPORTER METAL-BINDING PROTEIN"/>
    <property type="match status" value="1"/>
</dbReference>
<dbReference type="PANTHER" id="PTHR30477:SF3">
    <property type="entry name" value="METAL TRANSPORT SYSTEM MEMBRANE PROTEIN CT_069-RELATED"/>
    <property type="match status" value="1"/>
</dbReference>
<dbReference type="Pfam" id="PF00950">
    <property type="entry name" value="ABC-3"/>
    <property type="match status" value="1"/>
</dbReference>
<dbReference type="SUPFAM" id="SSF81345">
    <property type="entry name" value="ABC transporter involved in vitamin B12 uptake, BtuC"/>
    <property type="match status" value="1"/>
</dbReference>
<sequence>MHALMRLFSDYTLQNVVLGTLFLGLGSGLVGSFAVLRRQSLFGDAVSHATLPGIVIAFLLTGTKSTEILLLGAALSGLVGTVVMLMVMRTTKIDTDGAQGIVLGVFLGFGFLLLTHVQKSPQAAKAGLNKFILGQAATILQRDVLLIIAMEVVIGLLVLLFWKELKLSTFDRDFSAVQGFSPQLMEFMLTALIVVAVVVGVQAVGVILMSALLTAPAVAARQWTNSLRVLCALAALFGGVSGVSGSVVSAQVPRLSTGPVIVLVLTGIALVSIMLGPQRGVLYQLWRRRRVSLLQEEG</sequence>